<gene>
    <name evidence="1" type="primary">ubiC</name>
    <name type="ordered locus">BWG_3752</name>
</gene>
<sequence length="165" mass="18777">MSHPALTQLRALRYCKEIPALDPQLLDWLLLEDSMTKRFEQQGKTVSVTMIREGFVEQNEIPEELPLLPKESRYWLREILLCADGEPWLAGRTVVPVSTLSGPELALQKLGKTPLGRYLFTSSTLTRDFIEIGRDAGLWGRRSRLRLSGKPLLLTELFLPASPLY</sequence>
<proteinExistence type="inferred from homology"/>
<dbReference type="EC" id="4.1.3.40" evidence="1"/>
<dbReference type="EMBL" id="CP001396">
    <property type="protein sequence ID" value="ACR62144.1"/>
    <property type="molecule type" value="Genomic_DNA"/>
</dbReference>
<dbReference type="RefSeq" id="WP_001326644.1">
    <property type="nucleotide sequence ID" value="NC_012759.1"/>
</dbReference>
<dbReference type="SMR" id="C5A132"/>
<dbReference type="KEGG" id="ebw:BWG_3752"/>
<dbReference type="HOGENOM" id="CLU_096824_1_0_6"/>
<dbReference type="UniPathway" id="UPA00232"/>
<dbReference type="GO" id="GO:0005829">
    <property type="term" value="C:cytosol"/>
    <property type="evidence" value="ECO:0007669"/>
    <property type="project" value="TreeGrafter"/>
</dbReference>
<dbReference type="GO" id="GO:0008813">
    <property type="term" value="F:chorismate lyase activity"/>
    <property type="evidence" value="ECO:0007669"/>
    <property type="project" value="UniProtKB-UniRule"/>
</dbReference>
<dbReference type="GO" id="GO:0042866">
    <property type="term" value="P:pyruvate biosynthetic process"/>
    <property type="evidence" value="ECO:0007669"/>
    <property type="project" value="UniProtKB-UniRule"/>
</dbReference>
<dbReference type="GO" id="GO:0006744">
    <property type="term" value="P:ubiquinone biosynthetic process"/>
    <property type="evidence" value="ECO:0007669"/>
    <property type="project" value="UniProtKB-UniRule"/>
</dbReference>
<dbReference type="FunFam" id="3.40.1410.10:FF:000002">
    <property type="entry name" value="Chorismate pyruvate-lyase"/>
    <property type="match status" value="1"/>
</dbReference>
<dbReference type="Gene3D" id="3.40.1410.10">
    <property type="entry name" value="Chorismate lyase-like"/>
    <property type="match status" value="1"/>
</dbReference>
<dbReference type="HAMAP" id="MF_01632">
    <property type="entry name" value="UbiC"/>
    <property type="match status" value="1"/>
</dbReference>
<dbReference type="InterPro" id="IPR007440">
    <property type="entry name" value="Chorismate--pyruvate_lyase"/>
</dbReference>
<dbReference type="InterPro" id="IPR028978">
    <property type="entry name" value="Chorismate_lyase_/UTRA_dom_sf"/>
</dbReference>
<dbReference type="NCBIfam" id="NF008656">
    <property type="entry name" value="PRK11655.1"/>
    <property type="match status" value="1"/>
</dbReference>
<dbReference type="PANTHER" id="PTHR38683">
    <property type="entry name" value="CHORISMATE PYRUVATE-LYASE"/>
    <property type="match status" value="1"/>
</dbReference>
<dbReference type="PANTHER" id="PTHR38683:SF1">
    <property type="entry name" value="CHORISMATE PYRUVATE-LYASE"/>
    <property type="match status" value="1"/>
</dbReference>
<dbReference type="Pfam" id="PF04345">
    <property type="entry name" value="Chor_lyase"/>
    <property type="match status" value="1"/>
</dbReference>
<dbReference type="SUPFAM" id="SSF64288">
    <property type="entry name" value="Chorismate lyase-like"/>
    <property type="match status" value="1"/>
</dbReference>
<feature type="chain" id="PRO_1000215783" description="Chorismate pyruvate-lyase">
    <location>
        <begin position="1"/>
        <end position="165"/>
    </location>
</feature>
<feature type="binding site" evidence="1">
    <location>
        <position position="35"/>
    </location>
    <ligand>
        <name>substrate</name>
    </ligand>
</feature>
<feature type="binding site" evidence="1">
    <location>
        <position position="77"/>
    </location>
    <ligand>
        <name>substrate</name>
    </ligand>
</feature>
<feature type="binding site" evidence="1">
    <location>
        <position position="115"/>
    </location>
    <ligand>
        <name>substrate</name>
    </ligand>
</feature>
<feature type="binding site" evidence="1">
    <location>
        <position position="156"/>
    </location>
    <ligand>
        <name>substrate</name>
    </ligand>
</feature>
<reference key="1">
    <citation type="journal article" date="2009" name="J. Bacteriol.">
        <title>Genomic sequencing reveals regulatory mutations and recombinational events in the widely used MC4100 lineage of Escherichia coli K-12.</title>
        <authorList>
            <person name="Ferenci T."/>
            <person name="Zhou Z."/>
            <person name="Betteridge T."/>
            <person name="Ren Y."/>
            <person name="Liu Y."/>
            <person name="Feng L."/>
            <person name="Reeves P.R."/>
            <person name="Wang L."/>
        </authorList>
    </citation>
    <scope>NUCLEOTIDE SEQUENCE [LARGE SCALE GENOMIC DNA]</scope>
    <source>
        <strain>K12 / MC4100 / BW2952</strain>
    </source>
</reference>
<keyword id="KW-0963">Cytoplasm</keyword>
<keyword id="KW-0456">Lyase</keyword>
<keyword id="KW-0670">Pyruvate</keyword>
<keyword id="KW-0831">Ubiquinone biosynthesis</keyword>
<evidence type="ECO:0000255" key="1">
    <source>
        <dbReference type="HAMAP-Rule" id="MF_01632"/>
    </source>
</evidence>
<protein>
    <recommendedName>
        <fullName evidence="1">Chorismate pyruvate-lyase</fullName>
        <shortName evidence="1">CL</shortName>
        <shortName evidence="1">CPL</shortName>
        <ecNumber evidence="1">4.1.3.40</ecNumber>
    </recommendedName>
</protein>
<comment type="function">
    <text evidence="1">Removes the pyruvyl group from chorismate, with concomitant aromatization of the ring, to provide 4-hydroxybenzoate (4HB) for the ubiquinone pathway.</text>
</comment>
<comment type="catalytic activity">
    <reaction evidence="1">
        <text>chorismate = 4-hydroxybenzoate + pyruvate</text>
        <dbReference type="Rhea" id="RHEA:16505"/>
        <dbReference type="ChEBI" id="CHEBI:15361"/>
        <dbReference type="ChEBI" id="CHEBI:17879"/>
        <dbReference type="ChEBI" id="CHEBI:29748"/>
        <dbReference type="EC" id="4.1.3.40"/>
    </reaction>
</comment>
<comment type="pathway">
    <text evidence="1">Cofactor biosynthesis; ubiquinone biosynthesis.</text>
</comment>
<comment type="subunit">
    <text evidence="1">Monomer.</text>
</comment>
<comment type="subcellular location">
    <subcellularLocation>
        <location evidence="1">Cytoplasm</location>
    </subcellularLocation>
</comment>
<comment type="similarity">
    <text evidence="1">Belongs to the UbiC family.</text>
</comment>
<organism>
    <name type="scientific">Escherichia coli (strain K12 / MC4100 / BW2952)</name>
    <dbReference type="NCBI Taxonomy" id="595496"/>
    <lineage>
        <taxon>Bacteria</taxon>
        <taxon>Pseudomonadati</taxon>
        <taxon>Pseudomonadota</taxon>
        <taxon>Gammaproteobacteria</taxon>
        <taxon>Enterobacterales</taxon>
        <taxon>Enterobacteriaceae</taxon>
        <taxon>Escherichia</taxon>
    </lineage>
</organism>
<accession>C5A132</accession>
<name>UBIC_ECOBW</name>